<organism>
    <name type="scientific">Candida albicans (strain SC5314 / ATCC MYA-2876)</name>
    <name type="common">Yeast</name>
    <dbReference type="NCBI Taxonomy" id="237561"/>
    <lineage>
        <taxon>Eukaryota</taxon>
        <taxon>Fungi</taxon>
        <taxon>Dikarya</taxon>
        <taxon>Ascomycota</taxon>
        <taxon>Saccharomycotina</taxon>
        <taxon>Pichiomycetes</taxon>
        <taxon>Debaryomycetaceae</taxon>
        <taxon>Candida/Lodderomyces clade</taxon>
        <taxon>Candida</taxon>
    </lineage>
</organism>
<gene>
    <name evidence="8" type="primary">QCR8</name>
    <name type="ordered locus">CAALFM_C204590CA</name>
    <name type="ordered locus">orf19.4490.2</name>
</gene>
<dbReference type="EMBL" id="CP017624">
    <property type="protein sequence ID" value="AOW27485.1"/>
    <property type="molecule type" value="Genomic_DNA"/>
</dbReference>
<dbReference type="RefSeq" id="XP_019330771.1">
    <property type="nucleotide sequence ID" value="XM_019475226.1"/>
</dbReference>
<dbReference type="PDB" id="7RJA">
    <property type="method" value="EM"/>
    <property type="resolution" value="3.00 A"/>
    <property type="chains" value="F/P=1-95"/>
</dbReference>
<dbReference type="PDB" id="7RJB">
    <property type="method" value="EM"/>
    <property type="resolution" value="3.20 A"/>
    <property type="chains" value="F=1-95"/>
</dbReference>
<dbReference type="PDB" id="7RJC">
    <property type="method" value="EM"/>
    <property type="resolution" value="3.30 A"/>
    <property type="chains" value="F=1-95"/>
</dbReference>
<dbReference type="PDB" id="7RJD">
    <property type="method" value="EM"/>
    <property type="resolution" value="3.20 A"/>
    <property type="chains" value="F=1-95"/>
</dbReference>
<dbReference type="PDB" id="7RJE">
    <property type="method" value="EM"/>
    <property type="resolution" value="3.30 A"/>
    <property type="chains" value="F/O=1-95"/>
</dbReference>
<dbReference type="PDBsum" id="7RJA"/>
<dbReference type="PDBsum" id="7RJB"/>
<dbReference type="PDBsum" id="7RJC"/>
<dbReference type="PDBsum" id="7RJD"/>
<dbReference type="PDBsum" id="7RJE"/>
<dbReference type="EMDB" id="EMD-24482"/>
<dbReference type="EMDB" id="EMD-24483"/>
<dbReference type="EMDB" id="EMD-24484"/>
<dbReference type="EMDB" id="EMD-24485"/>
<dbReference type="EMDB" id="EMD-24486"/>
<dbReference type="SMR" id="A0A1D8PHA2"/>
<dbReference type="FunCoup" id="A0A1D8PHA2">
    <property type="interactions" value="99"/>
</dbReference>
<dbReference type="STRING" id="237561.A0A1D8PHA2"/>
<dbReference type="EnsemblFungi" id="C2_04590C_A-T">
    <property type="protein sequence ID" value="C2_04590C_A-T-p1"/>
    <property type="gene ID" value="C2_04590C_A"/>
</dbReference>
<dbReference type="GeneID" id="30515112"/>
<dbReference type="KEGG" id="cal:CAALFM_C204590CA"/>
<dbReference type="CGD" id="CAL0000201360">
    <property type="gene designation" value="QCR8"/>
</dbReference>
<dbReference type="VEuPathDB" id="FungiDB:C2_04590C_A"/>
<dbReference type="eggNOG" id="KOG4116">
    <property type="taxonomic scope" value="Eukaryota"/>
</dbReference>
<dbReference type="InParanoid" id="A0A1D8PHA2"/>
<dbReference type="OMA" id="QWAIERN"/>
<dbReference type="OrthoDB" id="6683853at2759"/>
<dbReference type="Proteomes" id="UP000000559">
    <property type="component" value="Chromosome 2"/>
</dbReference>
<dbReference type="GO" id="GO:0005743">
    <property type="term" value="C:mitochondrial inner membrane"/>
    <property type="evidence" value="ECO:0007669"/>
    <property type="project" value="UniProtKB-SubCell"/>
</dbReference>
<dbReference type="GO" id="GO:0005886">
    <property type="term" value="C:plasma membrane"/>
    <property type="evidence" value="ECO:0000314"/>
    <property type="project" value="CGD"/>
</dbReference>
<dbReference type="GO" id="GO:0045275">
    <property type="term" value="C:respiratory chain complex III"/>
    <property type="evidence" value="ECO:0000318"/>
    <property type="project" value="GO_Central"/>
</dbReference>
<dbReference type="GO" id="GO:0008121">
    <property type="term" value="F:ubiquinol-cytochrome-c reductase activity"/>
    <property type="evidence" value="ECO:0007669"/>
    <property type="project" value="EnsemblFungi"/>
</dbReference>
<dbReference type="GO" id="GO:0006122">
    <property type="term" value="P:mitochondrial electron transport, ubiquinol to cytochrome c"/>
    <property type="evidence" value="ECO:0000318"/>
    <property type="project" value="GO_Central"/>
</dbReference>
<dbReference type="FunFam" id="1.20.5.210:FF:000001">
    <property type="entry name" value="Cytochrome b-c1 complex subunit 8"/>
    <property type="match status" value="1"/>
</dbReference>
<dbReference type="Gene3D" id="1.20.5.210">
    <property type="entry name" value="Cytochrome b-c1 complex subunit 8"/>
    <property type="match status" value="1"/>
</dbReference>
<dbReference type="InterPro" id="IPR004205">
    <property type="entry name" value="Cyt_bc1_su8"/>
</dbReference>
<dbReference type="InterPro" id="IPR036642">
    <property type="entry name" value="Cyt_bc1_su8_sf"/>
</dbReference>
<dbReference type="PANTHER" id="PTHR12119:SF2">
    <property type="entry name" value="CYTOCHROME B-C1 COMPLEX SUBUNIT 8"/>
    <property type="match status" value="1"/>
</dbReference>
<dbReference type="PANTHER" id="PTHR12119">
    <property type="entry name" value="UBIQUINOL-CYTOCHROME C REDUCTASE COMPLEX UBIQUINONE-BINDING PROTEIN QP-C"/>
    <property type="match status" value="1"/>
</dbReference>
<dbReference type="Pfam" id="PF02939">
    <property type="entry name" value="UcrQ"/>
    <property type="match status" value="1"/>
</dbReference>
<dbReference type="SUPFAM" id="SSF81508">
    <property type="entry name" value="Ubiquinone-binding protein QP-C of cytochrome bc1 complex (Ubiquinol-cytochrome c reductase)"/>
    <property type="match status" value="1"/>
</dbReference>
<evidence type="ECO:0000250" key="1">
    <source>
        <dbReference type="UniProtKB" id="P08525"/>
    </source>
</evidence>
<evidence type="ECO:0000255" key="2"/>
<evidence type="ECO:0000269" key="3">
    <source>
    </source>
</evidence>
<evidence type="ECO:0000269" key="4">
    <source>
    </source>
</evidence>
<evidence type="ECO:0000269" key="5">
    <source>
    </source>
</evidence>
<evidence type="ECO:0000269" key="6">
    <source>
    </source>
</evidence>
<evidence type="ECO:0000269" key="7">
    <source>
    </source>
</evidence>
<evidence type="ECO:0000303" key="8">
    <source>
    </source>
</evidence>
<evidence type="ECO:0000303" key="9">
    <source>
    </source>
</evidence>
<evidence type="ECO:0000305" key="10"/>
<evidence type="ECO:0007744" key="11">
    <source>
        <dbReference type="PDB" id="7RJA"/>
    </source>
</evidence>
<evidence type="ECO:0007744" key="12">
    <source>
        <dbReference type="PDB" id="7RJB"/>
    </source>
</evidence>
<evidence type="ECO:0007744" key="13">
    <source>
        <dbReference type="PDB" id="7RJC"/>
    </source>
</evidence>
<evidence type="ECO:0007744" key="14">
    <source>
        <dbReference type="PDB" id="7RJD"/>
    </source>
</evidence>
<evidence type="ECO:0007744" key="15">
    <source>
        <dbReference type="PDB" id="7RJE"/>
    </source>
</evidence>
<evidence type="ECO:0007829" key="16">
    <source>
        <dbReference type="PDB" id="7RJA"/>
    </source>
</evidence>
<evidence type="ECO:0007829" key="17">
    <source>
        <dbReference type="PDB" id="7RJE"/>
    </source>
</evidence>
<keyword id="KW-0002">3D-structure</keyword>
<keyword id="KW-0249">Electron transport</keyword>
<keyword id="KW-0472">Membrane</keyword>
<keyword id="KW-0496">Mitochondrion</keyword>
<keyword id="KW-0999">Mitochondrion inner membrane</keyword>
<keyword id="KW-1185">Reference proteome</keyword>
<keyword id="KW-0679">Respiratory chain</keyword>
<keyword id="KW-0812">Transmembrane</keyword>
<keyword id="KW-1133">Transmembrane helix</keyword>
<keyword id="KW-0813">Transport</keyword>
<comment type="function">
    <text evidence="6 7">Component of the ubiquinol-cytochrome c oxidoreductase, a multisubunit transmembrane complex that is part of the mitochondrial electron transport chain which drives oxidative phosphorylation (PubMed:34525326, PubMed:36923588). The complex plays an important role in the uptake of multiple carbon sources present in different host niches (PubMed:36923588).</text>
</comment>
<comment type="subunit">
    <text evidence="6">Component of the ubiquinol-cytochrome c oxidoreductase (cytochrome b-c1 complex, complex III, CIII), a multisubunit enzyme composed of 10 subunits. The complex is composed of 3 respiratory subunits cytochrome b (COB), cytochrome c1 (CYT1) and Rieske protein (RIP1), 2 core protein subunits COR1 and QCR2, and 5 low-molecular weight protein subunits QCR6, QCR7, QCR8, QCR9 and QCR10. The complex exists as an obligatory dimer and forms supercomplexes (SCs) in the inner mitochondrial membrane with a monomer or a dimer of cytochrome c oxidase (complex IV, CIV), resulting in 2 different assemblies (supercomplexes III(2)IV and III(2)IV(2)).</text>
</comment>
<comment type="subcellular location">
    <subcellularLocation>
        <location evidence="4">Membrane</location>
        <topology evidence="2">Single-pass membrane protein</topology>
    </subcellularLocation>
    <subcellularLocation>
        <location evidence="1">Mitochondrion inner membrane</location>
        <topology evidence="1">Single-pass membrane protein</topology>
    </subcellularLocation>
</comment>
<comment type="induction">
    <text evidence="3 5 6">Expression is up-regulated in cells that undergo morphogenesis to form pseudohyphal cells when co-incubated with macrophages (PubMed:16039996). The promoter contains the conserved motif 5'-TGAAAA(G/T)GAAG-3' found in morphogenesis up-regulated genes involved in energy generation including ATP2, ATP3, ATP4, ATP20, QCR8, COX4, and SDH1 (PubMed:16039996). Expression is repressed during formation os spider biofilm (PubMed:34525326). Expression is repressed by HAP43 (PubMed:21592964).</text>
</comment>
<comment type="disruption phenotype">
    <text evidence="7">Leads to decreased vegetative growth on several carbon sources including maltose, citrate and acetate.</text>
</comment>
<comment type="similarity">
    <text evidence="10">Belongs to the UQCRQ/QCR8 family.</text>
</comment>
<accession>A0A1D8PHA2</accession>
<proteinExistence type="evidence at protein level"/>
<name>QCR8_CANAL</name>
<feature type="chain" id="PRO_0000459232" description="Cytochrome b-c1 complex subunit 8, mitochondrial">
    <location>
        <begin position="1"/>
        <end position="95"/>
    </location>
</feature>
<feature type="transmembrane region" description="Helical" evidence="2">
    <location>
        <begin position="57"/>
        <end position="74"/>
    </location>
</feature>
<feature type="strand" evidence="16">
    <location>
        <begin position="24"/>
        <end position="30"/>
    </location>
</feature>
<feature type="helix" evidence="17">
    <location>
        <begin position="32"/>
        <end position="34"/>
    </location>
</feature>
<feature type="turn" evidence="16">
    <location>
        <begin position="37"/>
        <end position="40"/>
    </location>
</feature>
<feature type="helix" evidence="16">
    <location>
        <begin position="41"/>
        <end position="81"/>
    </location>
</feature>
<feature type="turn" evidence="16">
    <location>
        <begin position="84"/>
        <end position="86"/>
    </location>
</feature>
<feature type="helix" evidence="16">
    <location>
        <begin position="87"/>
        <end position="92"/>
    </location>
</feature>
<protein>
    <recommendedName>
        <fullName evidence="9">Cytochrome b-c1 complex subunit 8, mitochondrial</fullName>
    </recommendedName>
    <alternativeName>
        <fullName evidence="9">Complex III subunit 8</fullName>
    </alternativeName>
</protein>
<reference key="1">
    <citation type="journal article" date="2004" name="Proc. Natl. Acad. Sci. U.S.A.">
        <title>The diploid genome sequence of Candida albicans.</title>
        <authorList>
            <person name="Jones T."/>
            <person name="Federspiel N.A."/>
            <person name="Chibana H."/>
            <person name="Dungan J."/>
            <person name="Kalman S."/>
            <person name="Magee B.B."/>
            <person name="Newport G."/>
            <person name="Thorstenson Y.R."/>
            <person name="Agabian N."/>
            <person name="Magee P.T."/>
            <person name="Davis R.W."/>
            <person name="Scherer S."/>
        </authorList>
    </citation>
    <scope>NUCLEOTIDE SEQUENCE [LARGE SCALE GENOMIC DNA]</scope>
    <source>
        <strain>SC5314 / ATCC MYA-2876</strain>
    </source>
</reference>
<reference key="2">
    <citation type="journal article" date="2007" name="Genome Biol.">
        <title>Assembly of the Candida albicans genome into sixteen supercontigs aligned on the eight chromosomes.</title>
        <authorList>
            <person name="van het Hoog M."/>
            <person name="Rast T.J."/>
            <person name="Martchenko M."/>
            <person name="Grindle S."/>
            <person name="Dignard D."/>
            <person name="Hogues H."/>
            <person name="Cuomo C."/>
            <person name="Berriman M."/>
            <person name="Scherer S."/>
            <person name="Magee B.B."/>
            <person name="Whiteway M."/>
            <person name="Chibana H."/>
            <person name="Nantel A."/>
            <person name="Magee P.T."/>
        </authorList>
    </citation>
    <scope>GENOME REANNOTATION</scope>
    <source>
        <strain>SC5314 / ATCC MYA-2876</strain>
    </source>
</reference>
<reference key="3">
    <citation type="journal article" date="2013" name="Genome Biol.">
        <title>Assembly of a phased diploid Candida albicans genome facilitates allele-specific measurements and provides a simple model for repeat and indel structure.</title>
        <authorList>
            <person name="Muzzey D."/>
            <person name="Schwartz K."/>
            <person name="Weissman J.S."/>
            <person name="Sherlock G."/>
        </authorList>
    </citation>
    <scope>NUCLEOTIDE SEQUENCE [LARGE SCALE GENOMIC DNA]</scope>
    <scope>GENOME REANNOTATION</scope>
    <source>
        <strain>SC5314 / ATCC MYA-2876</strain>
    </source>
</reference>
<reference key="4">
    <citation type="journal article" date="2005" name="Biochem. Biophys. Res. Commun.">
        <title>Global analysis of altered gene expression during morphogenesis of Candida albicans in vitro.</title>
        <authorList>
            <person name="Singh V."/>
            <person name="Sinha I."/>
            <person name="Sadhale P.P."/>
        </authorList>
    </citation>
    <scope>INDUCTION</scope>
</reference>
<reference key="5">
    <citation type="journal article" date="2009" name="Proteomics">
        <title>Analysis of Candida albicans plasma membrane proteome.</title>
        <authorList>
            <person name="Cabezon V."/>
            <person name="Llama-Palacios A."/>
            <person name="Nombela C."/>
            <person name="Monteoliva L."/>
            <person name="Gil C."/>
        </authorList>
    </citation>
    <scope>SUBCELLULAR LOCATION</scope>
</reference>
<reference key="6">
    <citation type="journal article" date="2011" name="J. Biol. Chem.">
        <title>Cap2-HAP complex is a critical transcriptional regulator that has dual but contrasting roles in regulation of iron homeostasis in Candida albicans.</title>
        <authorList>
            <person name="Singh R.P."/>
            <person name="Prasad H.K."/>
            <person name="Sinha I."/>
            <person name="Agarwal N."/>
            <person name="Natarajan K."/>
        </authorList>
    </citation>
    <scope>INDUCTION</scope>
</reference>
<reference key="7">
    <citation type="journal article" date="2012" name="Cell">
        <title>A recently evolved transcriptional network controls biofilm development in Candida albicans.</title>
        <authorList>
            <person name="Nobile C.J."/>
            <person name="Fox E.P."/>
            <person name="Nett J.E."/>
            <person name="Sorrells T.R."/>
            <person name="Mitrovich Q.M."/>
            <person name="Hernday A.D."/>
            <person name="Tuch B.B."/>
            <person name="Andes D.R."/>
            <person name="Johnson A.D."/>
        </authorList>
    </citation>
    <scope>INDUCTION</scope>
</reference>
<reference key="8">
    <citation type="journal article" date="2023" name="Front. Cell. Infect. Microbiol.">
        <title>QCR7 affects the virulence of Candida albicans and the uptake of multiple carbon sources present in different host niches.</title>
        <authorList>
            <person name="Zeng L."/>
            <person name="Huang Y."/>
            <person name="Tan J."/>
            <person name="Peng J."/>
            <person name="Hu N."/>
            <person name="Liu Q."/>
            <person name="Cao Y."/>
            <person name="Zhang Y."/>
            <person name="Chen J."/>
            <person name="Huang X."/>
        </authorList>
    </citation>
    <scope>FUNCTION</scope>
    <scope>DISRUPTION PHENOTYPE</scope>
</reference>
<reference evidence="11 12 13 14 15" key="9">
    <citation type="journal article" date="2022" name="Structure">
        <title>Rieske head domain dynamics and indazole-derivative inhibition of Candida albicans complex III.</title>
        <authorList>
            <person name="Di Trani J.M."/>
            <person name="Liu Z."/>
            <person name="Whitesell L."/>
            <person name="Brzezinski P."/>
            <person name="Cowen L.E."/>
            <person name="Rubinstein J.L."/>
        </authorList>
    </citation>
    <scope>STRUCTURE BY ELECTRON MICROSCOPY (3.00 ANGSTROMS) OF THE HOMODIMERIC RESPIRATORY COMPLEX III</scope>
    <scope>FUNCTION</scope>
    <scope>SUBUNIT</scope>
</reference>
<sequence length="95" mass="11112">MAGAPHPHTYMGWWGSLGSPKQKYITQYTISPYAAKPLKGAAYNAVFNTFRRTKNQFLYVAIPFVVVWSIWTRARDYNEYLYTKEGREELERVNV</sequence>